<organism>
    <name type="scientific">Leptospira interrogans serogroup Icterohaemorrhagiae serovar Lai (strain 56601)</name>
    <dbReference type="NCBI Taxonomy" id="189518"/>
    <lineage>
        <taxon>Bacteria</taxon>
        <taxon>Pseudomonadati</taxon>
        <taxon>Spirochaetota</taxon>
        <taxon>Spirochaetia</taxon>
        <taxon>Leptospirales</taxon>
        <taxon>Leptospiraceae</taxon>
        <taxon>Leptospira</taxon>
    </lineage>
</organism>
<feature type="chain" id="PRO_0000357090" description="Methylthioribulose-1-phosphate dehydratase">
    <location>
        <begin position="1"/>
        <end position="249"/>
    </location>
</feature>
<feature type="binding site" evidence="1">
    <location>
        <position position="103"/>
    </location>
    <ligand>
        <name>Zn(2+)</name>
        <dbReference type="ChEBI" id="CHEBI:29105"/>
    </ligand>
</feature>
<feature type="binding site" evidence="1">
    <location>
        <position position="105"/>
    </location>
    <ligand>
        <name>Zn(2+)</name>
        <dbReference type="ChEBI" id="CHEBI:29105"/>
    </ligand>
</feature>
<dbReference type="EC" id="4.2.1.109" evidence="1"/>
<dbReference type="EMBL" id="AE010301">
    <property type="protein sequence ID" value="AAN51851.1"/>
    <property type="molecule type" value="Genomic_DNA"/>
</dbReference>
<dbReference type="RefSeq" id="NP_714836.1">
    <property type="nucleotide sequence ID" value="NC_004343.2"/>
</dbReference>
<dbReference type="RefSeq" id="WP_000111958.1">
    <property type="nucleotide sequence ID" value="NC_004343.2"/>
</dbReference>
<dbReference type="SMR" id="Q8EXC1"/>
<dbReference type="FunCoup" id="Q8EXC1">
    <property type="interactions" value="316"/>
</dbReference>
<dbReference type="STRING" id="189518.LB_292"/>
<dbReference type="PaxDb" id="189518-LB_292"/>
<dbReference type="EnsemblBacteria" id="AAN51851">
    <property type="protein sequence ID" value="AAN51851"/>
    <property type="gene ID" value="LB_292"/>
</dbReference>
<dbReference type="KEGG" id="lil:LB_292"/>
<dbReference type="PATRIC" id="fig|189518.3.peg.4615"/>
<dbReference type="HOGENOM" id="CLU_006033_4_1_12"/>
<dbReference type="InParanoid" id="Q8EXC1"/>
<dbReference type="OrthoDB" id="9805559at2"/>
<dbReference type="UniPathway" id="UPA00904">
    <property type="reaction ID" value="UER00875"/>
</dbReference>
<dbReference type="Proteomes" id="UP000001408">
    <property type="component" value="Chromosome II"/>
</dbReference>
<dbReference type="GO" id="GO:0005737">
    <property type="term" value="C:cytoplasm"/>
    <property type="evidence" value="ECO:0000318"/>
    <property type="project" value="GO_Central"/>
</dbReference>
<dbReference type="GO" id="GO:0046570">
    <property type="term" value="F:methylthioribulose 1-phosphate dehydratase activity"/>
    <property type="evidence" value="ECO:0000318"/>
    <property type="project" value="GO_Central"/>
</dbReference>
<dbReference type="GO" id="GO:0008270">
    <property type="term" value="F:zinc ion binding"/>
    <property type="evidence" value="ECO:0007669"/>
    <property type="project" value="UniProtKB-UniRule"/>
</dbReference>
<dbReference type="GO" id="GO:0019509">
    <property type="term" value="P:L-methionine salvage from methylthioadenosine"/>
    <property type="evidence" value="ECO:0000318"/>
    <property type="project" value="GO_Central"/>
</dbReference>
<dbReference type="FunFam" id="3.40.225.10:FF:000020">
    <property type="entry name" value="Methylthioribulose-1-phosphate dehydratase"/>
    <property type="match status" value="1"/>
</dbReference>
<dbReference type="Gene3D" id="3.40.225.10">
    <property type="entry name" value="Class II aldolase/adducin N-terminal domain"/>
    <property type="match status" value="1"/>
</dbReference>
<dbReference type="HAMAP" id="MF_01677">
    <property type="entry name" value="Salvage_MtnB"/>
    <property type="match status" value="1"/>
</dbReference>
<dbReference type="InterPro" id="IPR001303">
    <property type="entry name" value="Aldolase_II/adducin_N"/>
</dbReference>
<dbReference type="InterPro" id="IPR036409">
    <property type="entry name" value="Aldolase_II/adducin_N_sf"/>
</dbReference>
<dbReference type="InterPro" id="IPR017714">
    <property type="entry name" value="MethylthioRu-1-P_deHdtase_MtnB"/>
</dbReference>
<dbReference type="NCBIfam" id="TIGR03328">
    <property type="entry name" value="salvage_mtnB"/>
    <property type="match status" value="1"/>
</dbReference>
<dbReference type="PANTHER" id="PTHR10640">
    <property type="entry name" value="METHYLTHIORIBULOSE-1-PHOSPHATE DEHYDRATASE"/>
    <property type="match status" value="1"/>
</dbReference>
<dbReference type="PANTHER" id="PTHR10640:SF7">
    <property type="entry name" value="METHYLTHIORIBULOSE-1-PHOSPHATE DEHYDRATASE"/>
    <property type="match status" value="1"/>
</dbReference>
<dbReference type="Pfam" id="PF00596">
    <property type="entry name" value="Aldolase_II"/>
    <property type="match status" value="1"/>
</dbReference>
<dbReference type="SMART" id="SM01007">
    <property type="entry name" value="Aldolase_II"/>
    <property type="match status" value="1"/>
</dbReference>
<dbReference type="SUPFAM" id="SSF53639">
    <property type="entry name" value="AraD/HMP-PK domain-like"/>
    <property type="match status" value="1"/>
</dbReference>
<accession>Q8EXC1</accession>
<gene>
    <name evidence="1" type="primary">mtnB</name>
    <name type="ordered locus">LB_292</name>
</gene>
<sequence>MSVKKQLERLSELGAYYHKNGWMPGTAGNLSIRIPEESGFWVSGSGLDKNLLNKRNFLYVDLESGKPVDSKNIKATKGLKPSAETSIHRAVYRALDGVGCGLHVHTLESNLICANTSKNEPIVLFELPAIEILKAYGIWEENPKVYVPIIYNFPNVQDISDCLEKYLKEYRPHVPFCIIEKHGITVWGKDAVQANRNLEATDFILKYMTSWKSFSYSGEPRKLSVSDVLGQDRREIFSVEFPVYPATFY</sequence>
<evidence type="ECO:0000255" key="1">
    <source>
        <dbReference type="HAMAP-Rule" id="MF_01677"/>
    </source>
</evidence>
<comment type="function">
    <text evidence="1">Catalyzes the dehydration of methylthioribulose-1-phosphate (MTRu-1-P) into 2,3-diketo-5-methylthiopentyl-1-phosphate (DK-MTP-1-P).</text>
</comment>
<comment type="catalytic activity">
    <reaction evidence="1">
        <text>5-(methylsulfanyl)-D-ribulose 1-phosphate = 5-methylsulfanyl-2,3-dioxopentyl phosphate + H2O</text>
        <dbReference type="Rhea" id="RHEA:15549"/>
        <dbReference type="ChEBI" id="CHEBI:15377"/>
        <dbReference type="ChEBI" id="CHEBI:58548"/>
        <dbReference type="ChEBI" id="CHEBI:58828"/>
        <dbReference type="EC" id="4.2.1.109"/>
    </reaction>
</comment>
<comment type="cofactor">
    <cofactor evidence="1">
        <name>Zn(2+)</name>
        <dbReference type="ChEBI" id="CHEBI:29105"/>
    </cofactor>
    <text evidence="1">Binds 1 zinc ion per subunit.</text>
</comment>
<comment type="pathway">
    <text evidence="1">Amino-acid biosynthesis; L-methionine biosynthesis via salvage pathway; L-methionine from S-methyl-5-thio-alpha-D-ribose 1-phosphate: step 2/6.</text>
</comment>
<comment type="similarity">
    <text evidence="1">Belongs to the aldolase class II family. MtnB subfamily.</text>
</comment>
<keyword id="KW-0028">Amino-acid biosynthesis</keyword>
<keyword id="KW-0456">Lyase</keyword>
<keyword id="KW-0479">Metal-binding</keyword>
<keyword id="KW-0486">Methionine biosynthesis</keyword>
<keyword id="KW-1185">Reference proteome</keyword>
<keyword id="KW-0862">Zinc</keyword>
<proteinExistence type="inferred from homology"/>
<protein>
    <recommendedName>
        <fullName evidence="1">Methylthioribulose-1-phosphate dehydratase</fullName>
        <shortName evidence="1">MTRu-1-P dehydratase</shortName>
        <ecNumber evidence="1">4.2.1.109</ecNumber>
    </recommendedName>
</protein>
<reference key="1">
    <citation type="journal article" date="2003" name="Nature">
        <title>Unique physiological and pathogenic features of Leptospira interrogans revealed by whole-genome sequencing.</title>
        <authorList>
            <person name="Ren S.-X."/>
            <person name="Fu G."/>
            <person name="Jiang X.-G."/>
            <person name="Zeng R."/>
            <person name="Miao Y.-G."/>
            <person name="Xu H."/>
            <person name="Zhang Y.-X."/>
            <person name="Xiong H."/>
            <person name="Lu G."/>
            <person name="Lu L.-F."/>
            <person name="Jiang H.-Q."/>
            <person name="Jia J."/>
            <person name="Tu Y.-F."/>
            <person name="Jiang J.-X."/>
            <person name="Gu W.-Y."/>
            <person name="Zhang Y.-Q."/>
            <person name="Cai Z."/>
            <person name="Sheng H.-H."/>
            <person name="Yin H.-F."/>
            <person name="Zhang Y."/>
            <person name="Zhu G.-F."/>
            <person name="Wan M."/>
            <person name="Huang H.-L."/>
            <person name="Qian Z."/>
            <person name="Wang S.-Y."/>
            <person name="Ma W."/>
            <person name="Yao Z.-J."/>
            <person name="Shen Y."/>
            <person name="Qiang B.-Q."/>
            <person name="Xia Q.-C."/>
            <person name="Guo X.-K."/>
            <person name="Danchin A."/>
            <person name="Saint Girons I."/>
            <person name="Somerville R.L."/>
            <person name="Wen Y.-M."/>
            <person name="Shi M.-H."/>
            <person name="Chen Z."/>
            <person name="Xu J.-G."/>
            <person name="Zhao G.-P."/>
        </authorList>
    </citation>
    <scope>NUCLEOTIDE SEQUENCE [LARGE SCALE GENOMIC DNA]</scope>
    <source>
        <strain>56601</strain>
    </source>
</reference>
<name>MTNB_LEPIN</name>